<comment type="function">
    <text evidence="1">Catalyzes the desulfonation of aliphatic sulfonates.</text>
</comment>
<comment type="catalytic activity">
    <reaction evidence="1">
        <text>an alkanesulfonate + FMNH2 + O2 = an aldehyde + FMN + sulfite + H2O + 2 H(+)</text>
        <dbReference type="Rhea" id="RHEA:23064"/>
        <dbReference type="ChEBI" id="CHEBI:15377"/>
        <dbReference type="ChEBI" id="CHEBI:15378"/>
        <dbReference type="ChEBI" id="CHEBI:15379"/>
        <dbReference type="ChEBI" id="CHEBI:17359"/>
        <dbReference type="ChEBI" id="CHEBI:17478"/>
        <dbReference type="ChEBI" id="CHEBI:57618"/>
        <dbReference type="ChEBI" id="CHEBI:58210"/>
        <dbReference type="ChEBI" id="CHEBI:134249"/>
        <dbReference type="EC" id="1.14.14.5"/>
    </reaction>
</comment>
<comment type="subunit">
    <text evidence="1">Homotetramer.</text>
</comment>
<comment type="miscellaneous">
    <text evidence="1">FMNH(2) which is absolutely required for this enzymatic reaction, is provided by SsuE.</text>
</comment>
<comment type="similarity">
    <text evidence="1">Belongs to the SsuD family.</text>
</comment>
<sequence length="382" mass="41650">MSINVFWFLPTHGDGHYLGSSEGARAVDYSYLQQIAQAADRLGFGGVLIPTGRSCEDSWLVAASLIPVTQRLKFLVALRPGIISPTLAARQAATLDRLSNGRALFNLVTGGDPEELAAEGLHLNHTERYEASAEFTHVWRKVLEGETVDFAGKHIQVKGAKLLFPPVQHPRPPLYFGGSSAAAQDLAAEQVELYLTWGETPEQVKEKIEEVRAKAAAKGRTVRFGIRLHVIVRETTEEAWRAANRLIANLDDKTIADAQQAFARFDSVGQQRMAALHGGKKDNLEISPNLWAGVGLVRGGAGTALVGDGPTVAQRIQEYADLGIDTFVFSGYPHLEEAYRVSELLFPHLDLATTELPTQRPATQPQGEVVANIYVPQKVSQS</sequence>
<accession>Q665B4</accession>
<gene>
    <name evidence="1" type="primary">ssuD</name>
    <name type="ordered locus">YPTB3604</name>
</gene>
<organism>
    <name type="scientific">Yersinia pseudotuberculosis serotype I (strain IP32953)</name>
    <dbReference type="NCBI Taxonomy" id="273123"/>
    <lineage>
        <taxon>Bacteria</taxon>
        <taxon>Pseudomonadati</taxon>
        <taxon>Pseudomonadota</taxon>
        <taxon>Gammaproteobacteria</taxon>
        <taxon>Enterobacterales</taxon>
        <taxon>Yersiniaceae</taxon>
        <taxon>Yersinia</taxon>
    </lineage>
</organism>
<dbReference type="EC" id="1.14.14.5" evidence="1"/>
<dbReference type="EMBL" id="BX936398">
    <property type="protein sequence ID" value="CAH22842.1"/>
    <property type="molecule type" value="Genomic_DNA"/>
</dbReference>
<dbReference type="RefSeq" id="WP_011193183.1">
    <property type="nucleotide sequence ID" value="NC_006155.1"/>
</dbReference>
<dbReference type="SMR" id="Q665B4"/>
<dbReference type="GeneID" id="49784406"/>
<dbReference type="KEGG" id="ypo:BZ17_2996"/>
<dbReference type="KEGG" id="yps:YPTB3604"/>
<dbReference type="PATRIC" id="fig|273123.14.peg.3134"/>
<dbReference type="Proteomes" id="UP000001011">
    <property type="component" value="Chromosome"/>
</dbReference>
<dbReference type="GO" id="GO:0008726">
    <property type="term" value="F:alkanesulfonate monooxygenase activity"/>
    <property type="evidence" value="ECO:0007669"/>
    <property type="project" value="UniProtKB-UniRule"/>
</dbReference>
<dbReference type="GO" id="GO:0046306">
    <property type="term" value="P:alkanesulfonate catabolic process"/>
    <property type="evidence" value="ECO:0007669"/>
    <property type="project" value="TreeGrafter"/>
</dbReference>
<dbReference type="CDD" id="cd01094">
    <property type="entry name" value="Alkanesulfonate_monoxygenase"/>
    <property type="match status" value="1"/>
</dbReference>
<dbReference type="FunFam" id="3.20.20.30:FF:000001">
    <property type="entry name" value="Alkanesulfonate monooxygenase"/>
    <property type="match status" value="1"/>
</dbReference>
<dbReference type="Gene3D" id="3.20.20.30">
    <property type="entry name" value="Luciferase-like domain"/>
    <property type="match status" value="1"/>
</dbReference>
<dbReference type="HAMAP" id="MF_01229">
    <property type="entry name" value="Alkanesulf_monooxygen"/>
    <property type="match status" value="1"/>
</dbReference>
<dbReference type="InterPro" id="IPR019911">
    <property type="entry name" value="Alkanesulphonate_mOase_FMN-dep"/>
</dbReference>
<dbReference type="InterPro" id="IPR011251">
    <property type="entry name" value="Luciferase-like_dom"/>
</dbReference>
<dbReference type="InterPro" id="IPR036661">
    <property type="entry name" value="Luciferase-like_sf"/>
</dbReference>
<dbReference type="InterPro" id="IPR050172">
    <property type="entry name" value="SsuD_RutA_monooxygenase"/>
</dbReference>
<dbReference type="NCBIfam" id="TIGR03565">
    <property type="entry name" value="alk_sulf_monoox"/>
    <property type="match status" value="1"/>
</dbReference>
<dbReference type="NCBIfam" id="NF001939">
    <property type="entry name" value="PRK00719.1"/>
    <property type="match status" value="1"/>
</dbReference>
<dbReference type="PANTHER" id="PTHR42847">
    <property type="entry name" value="ALKANESULFONATE MONOOXYGENASE"/>
    <property type="match status" value="1"/>
</dbReference>
<dbReference type="PANTHER" id="PTHR42847:SF4">
    <property type="entry name" value="ALKANESULFONATE MONOOXYGENASE-RELATED"/>
    <property type="match status" value="1"/>
</dbReference>
<dbReference type="Pfam" id="PF00296">
    <property type="entry name" value="Bac_luciferase"/>
    <property type="match status" value="1"/>
</dbReference>
<dbReference type="SUPFAM" id="SSF51679">
    <property type="entry name" value="Bacterial luciferase-like"/>
    <property type="match status" value="1"/>
</dbReference>
<keyword id="KW-0285">Flavoprotein</keyword>
<keyword id="KW-0288">FMN</keyword>
<keyword id="KW-0503">Monooxygenase</keyword>
<keyword id="KW-0560">Oxidoreductase</keyword>
<protein>
    <recommendedName>
        <fullName evidence="1">Alkanesulfonate monooxygenase</fullName>
        <ecNumber evidence="1">1.14.14.5</ecNumber>
    </recommendedName>
    <alternativeName>
        <fullName evidence="1">FMNH2-dependent aliphatic sulfonate monooxygenase</fullName>
    </alternativeName>
</protein>
<feature type="chain" id="PRO_0000216723" description="Alkanesulfonate monooxygenase">
    <location>
        <begin position="1"/>
        <end position="382"/>
    </location>
</feature>
<proteinExistence type="inferred from homology"/>
<evidence type="ECO:0000255" key="1">
    <source>
        <dbReference type="HAMAP-Rule" id="MF_01229"/>
    </source>
</evidence>
<name>SSUD_YERPS</name>
<reference key="1">
    <citation type="journal article" date="2004" name="Proc. Natl. Acad. Sci. U.S.A.">
        <title>Insights into the evolution of Yersinia pestis through whole-genome comparison with Yersinia pseudotuberculosis.</title>
        <authorList>
            <person name="Chain P.S.G."/>
            <person name="Carniel E."/>
            <person name="Larimer F.W."/>
            <person name="Lamerdin J."/>
            <person name="Stoutland P.O."/>
            <person name="Regala W.M."/>
            <person name="Georgescu A.M."/>
            <person name="Vergez L.M."/>
            <person name="Land M.L."/>
            <person name="Motin V.L."/>
            <person name="Brubaker R.R."/>
            <person name="Fowler J."/>
            <person name="Hinnebusch J."/>
            <person name="Marceau M."/>
            <person name="Medigue C."/>
            <person name="Simonet M."/>
            <person name="Chenal-Francisque V."/>
            <person name="Souza B."/>
            <person name="Dacheux D."/>
            <person name="Elliott J.M."/>
            <person name="Derbise A."/>
            <person name="Hauser L.J."/>
            <person name="Garcia E."/>
        </authorList>
    </citation>
    <scope>NUCLEOTIDE SEQUENCE [LARGE SCALE GENOMIC DNA]</scope>
    <source>
        <strain>IP32953</strain>
    </source>
</reference>